<dbReference type="EC" id="3.5.2.3" evidence="1"/>
<dbReference type="EMBL" id="CP001055">
    <property type="protein sequence ID" value="ACC98281.1"/>
    <property type="molecule type" value="Genomic_DNA"/>
</dbReference>
<dbReference type="RefSeq" id="WP_012414896.1">
    <property type="nucleotide sequence ID" value="NC_010644.1"/>
</dbReference>
<dbReference type="SMR" id="B2KCN5"/>
<dbReference type="STRING" id="445932.Emin_0726"/>
<dbReference type="KEGG" id="emi:Emin_0726"/>
<dbReference type="HOGENOM" id="CLU_015572_1_0_0"/>
<dbReference type="OrthoDB" id="9803027at2"/>
<dbReference type="UniPathway" id="UPA00070">
    <property type="reaction ID" value="UER00117"/>
</dbReference>
<dbReference type="Proteomes" id="UP000001029">
    <property type="component" value="Chromosome"/>
</dbReference>
<dbReference type="GO" id="GO:0005737">
    <property type="term" value="C:cytoplasm"/>
    <property type="evidence" value="ECO:0007669"/>
    <property type="project" value="TreeGrafter"/>
</dbReference>
<dbReference type="GO" id="GO:0004038">
    <property type="term" value="F:allantoinase activity"/>
    <property type="evidence" value="ECO:0007669"/>
    <property type="project" value="TreeGrafter"/>
</dbReference>
<dbReference type="GO" id="GO:0004151">
    <property type="term" value="F:dihydroorotase activity"/>
    <property type="evidence" value="ECO:0007669"/>
    <property type="project" value="UniProtKB-UniRule"/>
</dbReference>
<dbReference type="GO" id="GO:0008270">
    <property type="term" value="F:zinc ion binding"/>
    <property type="evidence" value="ECO:0007669"/>
    <property type="project" value="UniProtKB-UniRule"/>
</dbReference>
<dbReference type="GO" id="GO:0044205">
    <property type="term" value="P:'de novo' UMP biosynthetic process"/>
    <property type="evidence" value="ECO:0007669"/>
    <property type="project" value="UniProtKB-UniRule"/>
</dbReference>
<dbReference type="GO" id="GO:0006145">
    <property type="term" value="P:purine nucleobase catabolic process"/>
    <property type="evidence" value="ECO:0007669"/>
    <property type="project" value="TreeGrafter"/>
</dbReference>
<dbReference type="CDD" id="cd01317">
    <property type="entry name" value="DHOase_IIa"/>
    <property type="match status" value="1"/>
</dbReference>
<dbReference type="Gene3D" id="3.20.20.140">
    <property type="entry name" value="Metal-dependent hydrolases"/>
    <property type="match status" value="1"/>
</dbReference>
<dbReference type="Gene3D" id="2.30.40.10">
    <property type="entry name" value="Urease, subunit C, domain 1"/>
    <property type="match status" value="1"/>
</dbReference>
<dbReference type="HAMAP" id="MF_00220_B">
    <property type="entry name" value="PyrC_classI_B"/>
    <property type="match status" value="1"/>
</dbReference>
<dbReference type="InterPro" id="IPR006680">
    <property type="entry name" value="Amidohydro-rel"/>
</dbReference>
<dbReference type="InterPro" id="IPR004722">
    <property type="entry name" value="DHOase"/>
</dbReference>
<dbReference type="InterPro" id="IPR050138">
    <property type="entry name" value="DHOase/Allantoinase_Hydrolase"/>
</dbReference>
<dbReference type="InterPro" id="IPR002195">
    <property type="entry name" value="Dihydroorotase_CS"/>
</dbReference>
<dbReference type="InterPro" id="IPR011059">
    <property type="entry name" value="Metal-dep_hydrolase_composite"/>
</dbReference>
<dbReference type="InterPro" id="IPR032466">
    <property type="entry name" value="Metal_Hydrolase"/>
</dbReference>
<dbReference type="NCBIfam" id="TIGR00857">
    <property type="entry name" value="pyrC_multi"/>
    <property type="match status" value="1"/>
</dbReference>
<dbReference type="PANTHER" id="PTHR43668">
    <property type="entry name" value="ALLANTOINASE"/>
    <property type="match status" value="1"/>
</dbReference>
<dbReference type="PANTHER" id="PTHR43668:SF2">
    <property type="entry name" value="ALLANTOINASE"/>
    <property type="match status" value="1"/>
</dbReference>
<dbReference type="Pfam" id="PF01979">
    <property type="entry name" value="Amidohydro_1"/>
    <property type="match status" value="1"/>
</dbReference>
<dbReference type="SUPFAM" id="SSF51338">
    <property type="entry name" value="Composite domain of metallo-dependent hydrolases"/>
    <property type="match status" value="1"/>
</dbReference>
<dbReference type="SUPFAM" id="SSF51556">
    <property type="entry name" value="Metallo-dependent hydrolases"/>
    <property type="match status" value="1"/>
</dbReference>
<dbReference type="PROSITE" id="PS00483">
    <property type="entry name" value="DIHYDROOROTASE_2"/>
    <property type="match status" value="1"/>
</dbReference>
<gene>
    <name evidence="1" type="primary">pyrC</name>
    <name type="ordered locus">Emin_0726</name>
</gene>
<comment type="function">
    <text evidence="1">Catalyzes the reversible cyclization of carbamoyl aspartate to dihydroorotate.</text>
</comment>
<comment type="catalytic activity">
    <reaction evidence="1">
        <text>(S)-dihydroorotate + H2O = N-carbamoyl-L-aspartate + H(+)</text>
        <dbReference type="Rhea" id="RHEA:24296"/>
        <dbReference type="ChEBI" id="CHEBI:15377"/>
        <dbReference type="ChEBI" id="CHEBI:15378"/>
        <dbReference type="ChEBI" id="CHEBI:30864"/>
        <dbReference type="ChEBI" id="CHEBI:32814"/>
        <dbReference type="EC" id="3.5.2.3"/>
    </reaction>
</comment>
<comment type="cofactor">
    <cofactor evidence="1">
        <name>Zn(2+)</name>
        <dbReference type="ChEBI" id="CHEBI:29105"/>
    </cofactor>
    <text evidence="1">Binds 2 Zn(2+) ions per subunit.</text>
</comment>
<comment type="pathway">
    <text evidence="1">Pyrimidine metabolism; UMP biosynthesis via de novo pathway; (S)-dihydroorotate from bicarbonate: step 3/3.</text>
</comment>
<comment type="similarity">
    <text evidence="1">Belongs to the metallo-dependent hydrolases superfamily. DHOase family. Class I DHOase subfamily.</text>
</comment>
<feature type="chain" id="PRO_1000100074" description="Dihydroorotase">
    <location>
        <begin position="1"/>
        <end position="432"/>
    </location>
</feature>
<feature type="active site" evidence="1">
    <location>
        <position position="305"/>
    </location>
</feature>
<feature type="binding site" evidence="1">
    <location>
        <position position="60"/>
    </location>
    <ligand>
        <name>Zn(2+)</name>
        <dbReference type="ChEBI" id="CHEBI:29105"/>
        <label>1</label>
    </ligand>
</feature>
<feature type="binding site" evidence="1">
    <location>
        <begin position="62"/>
        <end position="64"/>
    </location>
    <ligand>
        <name>substrate</name>
    </ligand>
</feature>
<feature type="binding site" evidence="1">
    <location>
        <position position="62"/>
    </location>
    <ligand>
        <name>Zn(2+)</name>
        <dbReference type="ChEBI" id="CHEBI:29105"/>
        <label>1</label>
    </ligand>
</feature>
<feature type="binding site" evidence="1">
    <location>
        <position position="94"/>
    </location>
    <ligand>
        <name>substrate</name>
    </ligand>
</feature>
<feature type="binding site" evidence="1">
    <location>
        <position position="152"/>
    </location>
    <ligand>
        <name>Zn(2+)</name>
        <dbReference type="ChEBI" id="CHEBI:29105"/>
        <label>1</label>
    </ligand>
</feature>
<feature type="binding site" evidence="1">
    <location>
        <position position="152"/>
    </location>
    <ligand>
        <name>Zn(2+)</name>
        <dbReference type="ChEBI" id="CHEBI:29105"/>
        <label>2</label>
    </ligand>
</feature>
<feature type="binding site" evidence="1">
    <location>
        <position position="179"/>
    </location>
    <ligand>
        <name>Zn(2+)</name>
        <dbReference type="ChEBI" id="CHEBI:29105"/>
        <label>2</label>
    </ligand>
</feature>
<feature type="binding site" evidence="1">
    <location>
        <position position="232"/>
    </location>
    <ligand>
        <name>Zn(2+)</name>
        <dbReference type="ChEBI" id="CHEBI:29105"/>
        <label>2</label>
    </ligand>
</feature>
<feature type="binding site" evidence="1">
    <location>
        <position position="278"/>
    </location>
    <ligand>
        <name>substrate</name>
    </ligand>
</feature>
<feature type="binding site" evidence="1">
    <location>
        <position position="305"/>
    </location>
    <ligand>
        <name>Zn(2+)</name>
        <dbReference type="ChEBI" id="CHEBI:29105"/>
        <label>1</label>
    </ligand>
</feature>
<feature type="binding site" evidence="1">
    <location>
        <position position="309"/>
    </location>
    <ligand>
        <name>substrate</name>
    </ligand>
</feature>
<feature type="binding site" evidence="1">
    <location>
        <begin position="323"/>
        <end position="324"/>
    </location>
    <ligand>
        <name>substrate</name>
    </ligand>
</feature>
<accession>B2KCN5</accession>
<reference key="1">
    <citation type="journal article" date="2009" name="Appl. Environ. Microbiol.">
        <title>Genomic analysis of 'Elusimicrobium minutum,' the first cultivated representative of the phylum 'Elusimicrobia' (formerly termite group 1).</title>
        <authorList>
            <person name="Herlemann D.P.R."/>
            <person name="Geissinger O."/>
            <person name="Ikeda-Ohtsubo W."/>
            <person name="Kunin V."/>
            <person name="Sun H."/>
            <person name="Lapidus A."/>
            <person name="Hugenholtz P."/>
            <person name="Brune A."/>
        </authorList>
    </citation>
    <scope>NUCLEOTIDE SEQUENCE [LARGE SCALE GENOMIC DNA]</scope>
    <source>
        <strain>Pei191</strain>
    </source>
</reference>
<protein>
    <recommendedName>
        <fullName evidence="1">Dihydroorotase</fullName>
        <shortName evidence="1">DHOase</shortName>
        <ecNumber evidence="1">3.5.2.3</ecNumber>
    </recommendedName>
</protein>
<proteinExistence type="inferred from homology"/>
<keyword id="KW-0378">Hydrolase</keyword>
<keyword id="KW-0479">Metal-binding</keyword>
<keyword id="KW-0665">Pyrimidine biosynthesis</keyword>
<keyword id="KW-1185">Reference proteome</keyword>
<keyword id="KW-0862">Zinc</keyword>
<organism>
    <name type="scientific">Elusimicrobium minutum (strain Pei191)</name>
    <dbReference type="NCBI Taxonomy" id="445932"/>
    <lineage>
        <taxon>Bacteria</taxon>
        <taxon>Pseudomonadati</taxon>
        <taxon>Elusimicrobiota</taxon>
        <taxon>Elusimicrobia</taxon>
        <taxon>Elusimicrobiales</taxon>
        <taxon>Elusimicrobiaceae</taxon>
        <taxon>Elusimicrobium</taxon>
    </lineage>
</organism>
<evidence type="ECO:0000255" key="1">
    <source>
        <dbReference type="HAMAP-Rule" id="MF_00220"/>
    </source>
</evidence>
<name>PYRC_ELUMP</name>
<sequence>MKYLIKNAHVIDPANKIDGLKDILIENGKIAAVENKIEDNAAKIIDAKGLTAMPGFVDMHTHLREPGQEGKETIFTGTKAALKGGFTTVCMMPNTNPAMDSKNNLAIAQDIIRKTANVNVEIMGAITKNRAGKELSNFAELKQAGAIALSDDGSGVEDDAVMQAAFKESVKQDILLISHSEDSKLSAGGVMNEGLISTKLGLKPISNASEYEMVKREIQLAKGLDAKIHIAHVSTKESCEIIAKAKKQGVMVTAEATPHHFTLTDKACESFSGNTKMNPPLRSEADVEALKQALKDGTIDAIATDHAPHAVHEKEVEFDLAYFGIIGLETAFPLAYDVLVKSGLIDMAKLVGLMSLNPSKILGLKKGTLTPGADADITIVDLNKQWVYSKEEVQSLSCNSPFIGKNLQGYIEYTFVGGELKLENGTLKVKDA</sequence>